<name>GMT1_YEAS2</name>
<accession>C7GUZ7</accession>
<keyword id="KW-0968">Cytoplasmic vesicle</keyword>
<keyword id="KW-0256">Endoplasmic reticulum</keyword>
<keyword id="KW-0325">Glycoprotein</keyword>
<keyword id="KW-0333">Golgi apparatus</keyword>
<keyword id="KW-0472">Membrane</keyword>
<keyword id="KW-0762">Sugar transport</keyword>
<keyword id="KW-0812">Transmembrane</keyword>
<keyword id="KW-1133">Transmembrane helix</keyword>
<keyword id="KW-0813">Transport</keyword>
<comment type="function">
    <text evidence="1">Involved in the import of GDP-mannose from the cytoplasm into the Golgi lumen. Defective copy causes severe glycosylation defect and abnormal retention of soluble endoplasmic reticulum proteins. Involved in vanadate sensitivity (By similarity).</text>
</comment>
<comment type="subunit">
    <text evidence="1">Homooligomer.</text>
</comment>
<comment type="subcellular location">
    <subcellularLocation>
        <location evidence="1">Golgi apparatus membrane</location>
        <topology evidence="1">Multi-pass membrane protein</topology>
    </subcellularLocation>
    <subcellularLocation>
        <location evidence="1">Cytoplasmic vesicle membrane</location>
        <topology evidence="1">Multi-pass membrane protein</topology>
    </subcellularLocation>
    <subcellularLocation>
        <location evidence="1">Endoplasmic reticulum membrane</location>
        <topology evidence="1">Multi-pass membrane protein</topology>
    </subcellularLocation>
    <text evidence="1">Recycles between the Golgi apparatus and the endoplasmic reticulum.</text>
</comment>
<comment type="similarity">
    <text evidence="3">Belongs to the TPT transporter family. SLC35D subfamily.</text>
</comment>
<gene>
    <name type="primary">VRG4</name>
    <name type="synonym">GOG5</name>
    <name type="synonym">LDB3</name>
    <name type="synonym">MCD3</name>
    <name type="synonym">VAN2</name>
    <name type="synonym">VIG4</name>
    <name type="ORF">C1Q_04276</name>
</gene>
<sequence length="337" mass="37019">MSELKTGHAGHNPWASVANSGPISILSYCGSSILMTVTNKFVVNLKDFNMNFVMLFVQSLVCTITLIILRILGYAKFRSLNKTDAKNWFPISFLLVLMIYTSSKALQYLAVPIYTIFKNLTIILIAYGEVLFFGGSVTSMELSSFLLMVLSSVVATWGDQQAVAAKAASLAEGAAGAVASFNPGYFWMFTNCITSALFVLIMRKRIKLTNFKDFDTMFYNNVLALPILLLFSFCVEDWSSVNLTNNFSNDSLTAMIISGVASVGISYCSGWCVRVTSSTTYSMVGALNKLPIALSGLIFFDAPRNFLSILSIFIGFLSGIIYAVAKQKKQQAQPLRK</sequence>
<proteinExistence type="inferred from homology"/>
<feature type="chain" id="PRO_0000391673" description="GDP-mannose transporter 1">
    <location>
        <begin position="1"/>
        <end position="337"/>
    </location>
</feature>
<feature type="topological domain" description="Cytoplasmic" evidence="1">
    <location>
        <begin position="1"/>
        <end position="16"/>
    </location>
</feature>
<feature type="transmembrane region" description="Helical" evidence="2">
    <location>
        <begin position="17"/>
        <end position="37"/>
    </location>
</feature>
<feature type="topological domain" description="Lumenal" evidence="1">
    <location>
        <begin position="38"/>
        <end position="51"/>
    </location>
</feature>
<feature type="transmembrane region" description="Helical" evidence="2">
    <location>
        <begin position="52"/>
        <end position="72"/>
    </location>
</feature>
<feature type="topological domain" description="Cytoplasmic" evidence="1">
    <location>
        <begin position="73"/>
        <end position="92"/>
    </location>
</feature>
<feature type="transmembrane region" description="Helical" evidence="2">
    <location>
        <begin position="93"/>
        <end position="113"/>
    </location>
</feature>
<feature type="topological domain" description="Lumenal" evidence="1">
    <location>
        <begin position="114"/>
        <end position="119"/>
    </location>
</feature>
<feature type="transmembrane region" description="Helical" evidence="2">
    <location>
        <begin position="120"/>
        <end position="140"/>
    </location>
</feature>
<feature type="topological domain" description="Cytoplasmic" evidence="1">
    <location>
        <begin position="141"/>
        <end position="144"/>
    </location>
</feature>
<feature type="transmembrane region" description="Helical" evidence="2">
    <location>
        <begin position="145"/>
        <end position="165"/>
    </location>
</feature>
<feature type="topological domain" description="Lumenal" evidence="1">
    <location>
        <begin position="166"/>
        <end position="180"/>
    </location>
</feature>
<feature type="transmembrane region" description="Helical" evidence="2">
    <location>
        <begin position="181"/>
        <end position="201"/>
    </location>
</feature>
<feature type="topological domain" description="Cytoplasmic" evidence="1">
    <location>
        <begin position="202"/>
        <end position="215"/>
    </location>
</feature>
<feature type="transmembrane region" description="Helical" evidence="2">
    <location>
        <begin position="216"/>
        <end position="236"/>
    </location>
</feature>
<feature type="topological domain" description="Lumenal" evidence="1">
    <location>
        <begin position="237"/>
        <end position="252"/>
    </location>
</feature>
<feature type="transmembrane region" description="Helical" evidence="2">
    <location>
        <begin position="253"/>
        <end position="273"/>
    </location>
</feature>
<feature type="topological domain" description="Cytoplasmic" evidence="1">
    <location>
        <begin position="274"/>
        <end position="279"/>
    </location>
</feature>
<feature type="transmembrane region" description="Helical" evidence="2">
    <location>
        <begin position="280"/>
        <end position="300"/>
    </location>
</feature>
<feature type="topological domain" description="Lumenal" evidence="1">
    <location>
        <begin position="301"/>
        <end position="304"/>
    </location>
</feature>
<feature type="transmembrane region" description="Helical" evidence="2">
    <location>
        <begin position="305"/>
        <end position="325"/>
    </location>
</feature>
<feature type="topological domain" description="Cytoplasmic" evidence="1">
    <location>
        <begin position="326"/>
        <end position="337"/>
    </location>
</feature>
<feature type="glycosylation site" description="N-linked (GlcNAc...) asparagine" evidence="2">
    <location>
        <position position="119"/>
    </location>
</feature>
<feature type="glycosylation site" description="N-linked (GlcNAc...) asparagine" evidence="2">
    <location>
        <position position="242"/>
    </location>
</feature>
<feature type="glycosylation site" description="N-linked (GlcNAc...) asparagine" evidence="2">
    <location>
        <position position="246"/>
    </location>
</feature>
<feature type="glycosylation site" description="N-linked (GlcNAc...) asparagine" evidence="2">
    <location>
        <position position="249"/>
    </location>
</feature>
<reference key="1">
    <citation type="journal article" date="2009" name="Genome Res.">
        <title>Genome structure of a Saccharomyces cerevisiae strain widely used in bioethanol production.</title>
        <authorList>
            <person name="Argueso J.L."/>
            <person name="Carazzolle M.F."/>
            <person name="Mieczkowski P.A."/>
            <person name="Duarte F.M."/>
            <person name="Netto O.V.C."/>
            <person name="Missawa S.K."/>
            <person name="Galzerani F."/>
            <person name="Costa G.G.L."/>
            <person name="Vidal R.O."/>
            <person name="Noronha M.F."/>
            <person name="Dominska M."/>
            <person name="Andrietta M.G.S."/>
            <person name="Andrietta S.R."/>
            <person name="Cunha A.F."/>
            <person name="Gomes L.H."/>
            <person name="Tavares F.C.A."/>
            <person name="Alcarde A.R."/>
            <person name="Dietrich F.S."/>
            <person name="McCusker J.H."/>
            <person name="Petes T.D."/>
            <person name="Pereira G.A.G."/>
        </authorList>
    </citation>
    <scope>NUCLEOTIDE SEQUENCE [LARGE SCALE GENOMIC DNA]</scope>
    <source>
        <strain>JAY291</strain>
    </source>
</reference>
<organism>
    <name type="scientific">Saccharomyces cerevisiae (strain JAY291)</name>
    <name type="common">Baker's yeast</name>
    <dbReference type="NCBI Taxonomy" id="574961"/>
    <lineage>
        <taxon>Eukaryota</taxon>
        <taxon>Fungi</taxon>
        <taxon>Dikarya</taxon>
        <taxon>Ascomycota</taxon>
        <taxon>Saccharomycotina</taxon>
        <taxon>Saccharomycetes</taxon>
        <taxon>Saccharomycetales</taxon>
        <taxon>Saccharomycetaceae</taxon>
        <taxon>Saccharomyces</taxon>
    </lineage>
</organism>
<evidence type="ECO:0000250" key="1"/>
<evidence type="ECO:0000255" key="2"/>
<evidence type="ECO:0000305" key="3"/>
<protein>
    <recommendedName>
        <fullName>GDP-mannose transporter 1</fullName>
        <shortName>GMT 1</shortName>
    </recommendedName>
    <alternativeName>
        <fullName>Low dye-binding protein 3</fullName>
    </alternativeName>
    <alternativeName>
        <fullName>Morphogenesis checkpoint-dependent protein 3</fullName>
    </alternativeName>
    <alternativeName>
        <fullName>Vanadate resistance glycosylation protein 4</fullName>
    </alternativeName>
</protein>
<dbReference type="EMBL" id="ACFL01000328">
    <property type="protein sequence ID" value="EEU05374.1"/>
    <property type="molecule type" value="Genomic_DNA"/>
</dbReference>
<dbReference type="SMR" id="C7GUZ7"/>
<dbReference type="GlyCosmos" id="C7GUZ7">
    <property type="glycosylation" value="4 sites, No reported glycans"/>
</dbReference>
<dbReference type="Proteomes" id="UP000008073">
    <property type="component" value="Unassembled WGS sequence"/>
</dbReference>
<dbReference type="GO" id="GO:0030659">
    <property type="term" value="C:cytoplasmic vesicle membrane"/>
    <property type="evidence" value="ECO:0007669"/>
    <property type="project" value="UniProtKB-SubCell"/>
</dbReference>
<dbReference type="GO" id="GO:0005789">
    <property type="term" value="C:endoplasmic reticulum membrane"/>
    <property type="evidence" value="ECO:0007669"/>
    <property type="project" value="UniProtKB-SubCell"/>
</dbReference>
<dbReference type="GO" id="GO:0000139">
    <property type="term" value="C:Golgi membrane"/>
    <property type="evidence" value="ECO:0007669"/>
    <property type="project" value="UniProtKB-SubCell"/>
</dbReference>
<dbReference type="GO" id="GO:0055085">
    <property type="term" value="P:transmembrane transport"/>
    <property type="evidence" value="ECO:0007669"/>
    <property type="project" value="InterPro"/>
</dbReference>
<dbReference type="InterPro" id="IPR013657">
    <property type="entry name" value="SCL35B1-4/HUT1"/>
</dbReference>
<dbReference type="InterPro" id="IPR050186">
    <property type="entry name" value="TPT_transporter"/>
</dbReference>
<dbReference type="NCBIfam" id="TIGR00803">
    <property type="entry name" value="nst"/>
    <property type="match status" value="1"/>
</dbReference>
<dbReference type="PANTHER" id="PTHR11132">
    <property type="entry name" value="SOLUTE CARRIER FAMILY 35"/>
    <property type="match status" value="1"/>
</dbReference>
<dbReference type="Pfam" id="PF08449">
    <property type="entry name" value="UAA"/>
    <property type="match status" value="1"/>
</dbReference>
<dbReference type="SUPFAM" id="SSF103481">
    <property type="entry name" value="Multidrug resistance efflux transporter EmrE"/>
    <property type="match status" value="1"/>
</dbReference>